<sequence length="101" mass="11717">MAKKSMIQRELKREKLVAKYAQKRAEFKAIILDINSTEEQIWKAQIKLQKLPVNSSASRVQRRCKVTGRPHAVYRKFGLCRNKLREYAMAGDVPGLKKASW</sequence>
<comment type="function">
    <text evidence="1">Binds 16S rRNA, required for the assembly of 30S particles and may also be responsible for determining the conformation of the 16S rRNA at the A site.</text>
</comment>
<comment type="subunit">
    <text evidence="1">Part of the 30S ribosomal subunit. Contacts proteins S3 and S10.</text>
</comment>
<comment type="similarity">
    <text evidence="1">Belongs to the universal ribosomal protein uS14 family.</text>
</comment>
<feature type="chain" id="PRO_1000128407" description="Small ribosomal subunit protein uS14">
    <location>
        <begin position="1"/>
        <end position="101"/>
    </location>
</feature>
<gene>
    <name evidence="1" type="primary">rpsN</name>
    <name type="ordered locus">FTA_0264</name>
</gene>
<protein>
    <recommendedName>
        <fullName evidence="1">Small ribosomal subunit protein uS14</fullName>
    </recommendedName>
    <alternativeName>
        <fullName evidence="2">30S ribosomal protein S14</fullName>
    </alternativeName>
</protein>
<name>RS14_FRATF</name>
<proteinExistence type="inferred from homology"/>
<accession>A7N9T8</accession>
<organism>
    <name type="scientific">Francisella tularensis subsp. holarctica (strain FTNF002-00 / FTA)</name>
    <dbReference type="NCBI Taxonomy" id="458234"/>
    <lineage>
        <taxon>Bacteria</taxon>
        <taxon>Pseudomonadati</taxon>
        <taxon>Pseudomonadota</taxon>
        <taxon>Gammaproteobacteria</taxon>
        <taxon>Thiotrichales</taxon>
        <taxon>Francisellaceae</taxon>
        <taxon>Francisella</taxon>
    </lineage>
</organism>
<keyword id="KW-0687">Ribonucleoprotein</keyword>
<keyword id="KW-0689">Ribosomal protein</keyword>
<keyword id="KW-0694">RNA-binding</keyword>
<keyword id="KW-0699">rRNA-binding</keyword>
<reference key="1">
    <citation type="journal article" date="2009" name="PLoS ONE">
        <title>Complete genome sequence of Francisella tularensis subspecies holarctica FTNF002-00.</title>
        <authorList>
            <person name="Barabote R.D."/>
            <person name="Xie G."/>
            <person name="Brettin T.S."/>
            <person name="Hinrichs S.H."/>
            <person name="Fey P.D."/>
            <person name="Jay J.J."/>
            <person name="Engle J.L."/>
            <person name="Godbole S.D."/>
            <person name="Noronha J.M."/>
            <person name="Scheuermann R.H."/>
            <person name="Zhou L.W."/>
            <person name="Lion C."/>
            <person name="Dempsey M.P."/>
        </authorList>
    </citation>
    <scope>NUCLEOTIDE SEQUENCE [LARGE SCALE GENOMIC DNA]</scope>
    <source>
        <strain>FTNF002-00 / FTA</strain>
    </source>
</reference>
<evidence type="ECO:0000255" key="1">
    <source>
        <dbReference type="HAMAP-Rule" id="MF_00537"/>
    </source>
</evidence>
<evidence type="ECO:0000305" key="2"/>
<dbReference type="EMBL" id="CP000803">
    <property type="protein sequence ID" value="ABU60741.1"/>
    <property type="molecule type" value="Genomic_DNA"/>
</dbReference>
<dbReference type="RefSeq" id="WP_010030773.1">
    <property type="nucleotide sequence ID" value="NC_009749.1"/>
</dbReference>
<dbReference type="SMR" id="A7N9T8"/>
<dbReference type="KEGG" id="fta:FTA_0264"/>
<dbReference type="HOGENOM" id="CLU_139869_0_1_6"/>
<dbReference type="GO" id="GO:0005737">
    <property type="term" value="C:cytoplasm"/>
    <property type="evidence" value="ECO:0007669"/>
    <property type="project" value="UniProtKB-ARBA"/>
</dbReference>
<dbReference type="GO" id="GO:0015935">
    <property type="term" value="C:small ribosomal subunit"/>
    <property type="evidence" value="ECO:0007669"/>
    <property type="project" value="TreeGrafter"/>
</dbReference>
<dbReference type="GO" id="GO:0019843">
    <property type="term" value="F:rRNA binding"/>
    <property type="evidence" value="ECO:0007669"/>
    <property type="project" value="UniProtKB-UniRule"/>
</dbReference>
<dbReference type="GO" id="GO:0003735">
    <property type="term" value="F:structural constituent of ribosome"/>
    <property type="evidence" value="ECO:0007669"/>
    <property type="project" value="InterPro"/>
</dbReference>
<dbReference type="GO" id="GO:0006412">
    <property type="term" value="P:translation"/>
    <property type="evidence" value="ECO:0007669"/>
    <property type="project" value="UniProtKB-UniRule"/>
</dbReference>
<dbReference type="FunFam" id="1.10.287.1480:FF:000001">
    <property type="entry name" value="30S ribosomal protein S14"/>
    <property type="match status" value="1"/>
</dbReference>
<dbReference type="Gene3D" id="1.10.287.1480">
    <property type="match status" value="1"/>
</dbReference>
<dbReference type="HAMAP" id="MF_00537">
    <property type="entry name" value="Ribosomal_uS14_1"/>
    <property type="match status" value="1"/>
</dbReference>
<dbReference type="InterPro" id="IPR001209">
    <property type="entry name" value="Ribosomal_uS14"/>
</dbReference>
<dbReference type="InterPro" id="IPR023036">
    <property type="entry name" value="Ribosomal_uS14_bac/plastid"/>
</dbReference>
<dbReference type="InterPro" id="IPR018271">
    <property type="entry name" value="Ribosomal_uS14_CS"/>
</dbReference>
<dbReference type="NCBIfam" id="NF006477">
    <property type="entry name" value="PRK08881.1"/>
    <property type="match status" value="1"/>
</dbReference>
<dbReference type="PANTHER" id="PTHR19836">
    <property type="entry name" value="30S RIBOSOMAL PROTEIN S14"/>
    <property type="match status" value="1"/>
</dbReference>
<dbReference type="PANTHER" id="PTHR19836:SF19">
    <property type="entry name" value="SMALL RIBOSOMAL SUBUNIT PROTEIN US14M"/>
    <property type="match status" value="1"/>
</dbReference>
<dbReference type="Pfam" id="PF00253">
    <property type="entry name" value="Ribosomal_S14"/>
    <property type="match status" value="1"/>
</dbReference>
<dbReference type="SUPFAM" id="SSF57716">
    <property type="entry name" value="Glucocorticoid receptor-like (DNA-binding domain)"/>
    <property type="match status" value="1"/>
</dbReference>
<dbReference type="PROSITE" id="PS00527">
    <property type="entry name" value="RIBOSOMAL_S14"/>
    <property type="match status" value="1"/>
</dbReference>